<dbReference type="EMBL" id="BC105236">
    <property type="protein sequence ID" value="AAI05237.1"/>
    <property type="molecule type" value="mRNA"/>
</dbReference>
<dbReference type="RefSeq" id="NP_001029881.1">
    <property type="nucleotide sequence ID" value="NM_001034709.2"/>
</dbReference>
<dbReference type="SMR" id="Q3MHH5"/>
<dbReference type="FunCoup" id="Q3MHH5">
    <property type="interactions" value="859"/>
</dbReference>
<dbReference type="STRING" id="9913.ENSBTAP00000035894"/>
<dbReference type="PaxDb" id="9913-ENSBTAP00000035894"/>
<dbReference type="GeneID" id="540547"/>
<dbReference type="KEGG" id="bta:540547"/>
<dbReference type="CTD" id="896"/>
<dbReference type="eggNOG" id="KOG0656">
    <property type="taxonomic scope" value="Eukaryota"/>
</dbReference>
<dbReference type="InParanoid" id="Q3MHH5"/>
<dbReference type="OrthoDB" id="306099at2759"/>
<dbReference type="Proteomes" id="UP000009136">
    <property type="component" value="Unplaced"/>
</dbReference>
<dbReference type="GO" id="GO:0000307">
    <property type="term" value="C:cyclin-dependent protein kinase holoenzyme complex"/>
    <property type="evidence" value="ECO:0000318"/>
    <property type="project" value="GO_Central"/>
</dbReference>
<dbReference type="GO" id="GO:0005737">
    <property type="term" value="C:cytoplasm"/>
    <property type="evidence" value="ECO:0000318"/>
    <property type="project" value="GO_Central"/>
</dbReference>
<dbReference type="GO" id="GO:0005815">
    <property type="term" value="C:microtubule organizing center"/>
    <property type="evidence" value="ECO:0000318"/>
    <property type="project" value="GO_Central"/>
</dbReference>
<dbReference type="GO" id="GO:0005634">
    <property type="term" value="C:nucleus"/>
    <property type="evidence" value="ECO:0000318"/>
    <property type="project" value="GO_Central"/>
</dbReference>
<dbReference type="GO" id="GO:0016538">
    <property type="term" value="F:cyclin-dependent protein serine/threonine kinase regulator activity"/>
    <property type="evidence" value="ECO:0000318"/>
    <property type="project" value="GO_Central"/>
</dbReference>
<dbReference type="GO" id="GO:0051301">
    <property type="term" value="P:cell division"/>
    <property type="evidence" value="ECO:0007669"/>
    <property type="project" value="UniProtKB-KW"/>
</dbReference>
<dbReference type="GO" id="GO:0000082">
    <property type="term" value="P:G1/S transition of mitotic cell cycle"/>
    <property type="evidence" value="ECO:0000318"/>
    <property type="project" value="GO_Central"/>
</dbReference>
<dbReference type="GO" id="GO:1900087">
    <property type="term" value="P:positive regulation of G1/S transition of mitotic cell cycle"/>
    <property type="evidence" value="ECO:0000318"/>
    <property type="project" value="GO_Central"/>
</dbReference>
<dbReference type="CDD" id="cd20575">
    <property type="entry name" value="CYCLIN_CCND3_rpt1"/>
    <property type="match status" value="1"/>
</dbReference>
<dbReference type="FunFam" id="1.10.472.10:FF:000012">
    <property type="entry name" value="G1/S-specific cyclin-D1"/>
    <property type="match status" value="1"/>
</dbReference>
<dbReference type="FunFam" id="1.10.472.10:FF:000096">
    <property type="entry name" value="G1/S-specific cyclin-D3 isoform X2"/>
    <property type="match status" value="1"/>
</dbReference>
<dbReference type="Gene3D" id="1.10.472.10">
    <property type="entry name" value="Cyclin-like"/>
    <property type="match status" value="2"/>
</dbReference>
<dbReference type="InterPro" id="IPR039361">
    <property type="entry name" value="Cyclin"/>
</dbReference>
<dbReference type="InterPro" id="IPR013763">
    <property type="entry name" value="Cyclin-like_dom"/>
</dbReference>
<dbReference type="InterPro" id="IPR036915">
    <property type="entry name" value="Cyclin-like_sf"/>
</dbReference>
<dbReference type="InterPro" id="IPR004367">
    <property type="entry name" value="Cyclin_C-dom"/>
</dbReference>
<dbReference type="InterPro" id="IPR006671">
    <property type="entry name" value="Cyclin_N"/>
</dbReference>
<dbReference type="InterPro" id="IPR048258">
    <property type="entry name" value="Cyclins_cyclin-box"/>
</dbReference>
<dbReference type="PANTHER" id="PTHR10177">
    <property type="entry name" value="CYCLINS"/>
    <property type="match status" value="1"/>
</dbReference>
<dbReference type="Pfam" id="PF02984">
    <property type="entry name" value="Cyclin_C"/>
    <property type="match status" value="1"/>
</dbReference>
<dbReference type="Pfam" id="PF00134">
    <property type="entry name" value="Cyclin_N"/>
    <property type="match status" value="1"/>
</dbReference>
<dbReference type="SMART" id="SM00385">
    <property type="entry name" value="CYCLIN"/>
    <property type="match status" value="1"/>
</dbReference>
<dbReference type="SMART" id="SM01332">
    <property type="entry name" value="Cyclin_C"/>
    <property type="match status" value="1"/>
</dbReference>
<dbReference type="SUPFAM" id="SSF47954">
    <property type="entry name" value="Cyclin-like"/>
    <property type="match status" value="2"/>
</dbReference>
<dbReference type="PROSITE" id="PS00292">
    <property type="entry name" value="CYCLINS"/>
    <property type="match status" value="1"/>
</dbReference>
<comment type="function">
    <text evidence="2">Regulatory component of the cyclin D3-CDK4 (DC) complex that phosphorylates and inhibits members of the retinoblastoma (RB) protein family including RB1 and regulates the cell-cycle during G(1)/S transition. Phosphorylation of RB1 allows dissociation of the transcription factor E2F from the RB/E2F complex and the subsequent transcription of E2F target genes which are responsible for the progression through the G(1) phase. Hypophosphorylates RB1 in early G(1) phase. Cyclin D-CDK4 complexes are major integrators of various mitogenenic and antimitogenic signals. Component of the ternary complex, cyclin D3/CDK4/CDKN1B, required for nuclear translocation and activity of the cyclin D-CDK4 complex. Shows transcriptional coactivator activity with ATF5 independently of CDK4.</text>
</comment>
<comment type="subunit">
    <text evidence="2">Interacts with the CDK4 and CDK6 protein kinases to form a serine/threonine kinase holoenzyme complex. The cyclin subunit imparts substrate specificity to the complex. Interacts with ATF5. Interacts with EIF3K. Component of the ternary complex cyclin D/CDK4/CDKN1B required for nuclear translocation and modulation of CDK4-mediated kinase activity. Can form similar complexes with either CDKN1A or CDKN2A.</text>
</comment>
<comment type="subcellular location">
    <subcellularLocation>
        <location evidence="2">Nucleus</location>
    </subcellularLocation>
    <subcellularLocation>
        <location evidence="2">Cytoplasm</location>
    </subcellularLocation>
</comment>
<comment type="PTM">
    <text evidence="1">Phosphorylation at Thr-283 by MAP kinases is required for ubiquitination and degradation by the DCX(AMBRA1) complex.</text>
</comment>
<comment type="PTM">
    <text evidence="2 3">Ubiquitinated by the DCX(AMBRA1) complex during the transition from G1 to S cell phase, leading to its degradation: ubiquitination is dependent on Thr-283 phosphorylation. The DCX(AMBRA1) complex represents the major regulator of CCND3 stability during the G1/S transition (By similarity). Polyubiquitinated by the SCF(FBXL2) complex, leading to proteasomal degradation (By similarity).</text>
</comment>
<comment type="similarity">
    <text evidence="5">Belongs to the cyclin family. Cyclin D subfamily.</text>
</comment>
<accession>Q3MHH5</accession>
<feature type="chain" id="PRO_0000236254" description="G1/S-specific cyclin-D3">
    <location>
        <begin position="1"/>
        <end position="292"/>
    </location>
</feature>
<feature type="domain" description="Cyclin N-terminal">
    <location>
        <begin position="27"/>
        <end position="152"/>
    </location>
</feature>
<feature type="region of interest" description="Disordered" evidence="4">
    <location>
        <begin position="255"/>
        <end position="292"/>
    </location>
</feature>
<feature type="compositionally biased region" description="Low complexity" evidence="4">
    <location>
        <begin position="272"/>
        <end position="285"/>
    </location>
</feature>
<feature type="modified residue" description="Phosphoserine" evidence="3">
    <location>
        <position position="264"/>
    </location>
</feature>
<feature type="modified residue" description="Phosphoserine" evidence="2">
    <location>
        <position position="279"/>
    </location>
</feature>
<feature type="modified residue" description="Phosphothreonine" evidence="1">
    <location>
        <position position="283"/>
    </location>
</feature>
<name>CCND3_BOVIN</name>
<organism>
    <name type="scientific">Bos taurus</name>
    <name type="common">Bovine</name>
    <dbReference type="NCBI Taxonomy" id="9913"/>
    <lineage>
        <taxon>Eukaryota</taxon>
        <taxon>Metazoa</taxon>
        <taxon>Chordata</taxon>
        <taxon>Craniata</taxon>
        <taxon>Vertebrata</taxon>
        <taxon>Euteleostomi</taxon>
        <taxon>Mammalia</taxon>
        <taxon>Eutheria</taxon>
        <taxon>Laurasiatheria</taxon>
        <taxon>Artiodactyla</taxon>
        <taxon>Ruminantia</taxon>
        <taxon>Pecora</taxon>
        <taxon>Bovidae</taxon>
        <taxon>Bovinae</taxon>
        <taxon>Bos</taxon>
    </lineage>
</organism>
<protein>
    <recommendedName>
        <fullName>G1/S-specific cyclin-D3</fullName>
    </recommendedName>
</protein>
<sequence length="292" mass="32436">MELLCCEGTRHAPRAGPDPRLLGDQRVLQSLLRLEERYVPRASYFQCVQREIKPHMRKMLAYWMLEVCEEQRCEEEVFPLAMNYLDRYLSCVPTRKAQLQLLGAVCMLLASKLRETTPLTIEKLCIYTDHSVSPRQLRDWEVLVLGKLKWDLAAVIAHDFLALILHRLSLPRDRQALVKKHAQTFLALCATDYTFAMYPPSMIATGSIGAAVQGLGACSTSGDELTELLAGIAGTEVDCLRACQEQIEAALRESLREAAQTSPSPAPKAPRGSSSQGPSQTSTPTDVTAIHL</sequence>
<reference key="1">
    <citation type="submission" date="2005-09" db="EMBL/GenBank/DDBJ databases">
        <authorList>
            <consortium name="NIH - Mammalian Gene Collection (MGC) project"/>
        </authorList>
    </citation>
    <scope>NUCLEOTIDE SEQUENCE [LARGE SCALE MRNA]</scope>
    <source>
        <strain>Hereford</strain>
        <tissue>Thymus</tissue>
    </source>
</reference>
<proteinExistence type="evidence at transcript level"/>
<evidence type="ECO:0000250" key="1">
    <source>
        <dbReference type="UniProtKB" id="P24385"/>
    </source>
</evidence>
<evidence type="ECO:0000250" key="2">
    <source>
        <dbReference type="UniProtKB" id="P30281"/>
    </source>
</evidence>
<evidence type="ECO:0000250" key="3">
    <source>
        <dbReference type="UniProtKB" id="P30282"/>
    </source>
</evidence>
<evidence type="ECO:0000256" key="4">
    <source>
        <dbReference type="SAM" id="MobiDB-lite"/>
    </source>
</evidence>
<evidence type="ECO:0000305" key="5"/>
<gene>
    <name type="primary">CCND3</name>
</gene>
<keyword id="KW-0131">Cell cycle</keyword>
<keyword id="KW-0132">Cell division</keyword>
<keyword id="KW-0195">Cyclin</keyword>
<keyword id="KW-0963">Cytoplasm</keyword>
<keyword id="KW-0539">Nucleus</keyword>
<keyword id="KW-0597">Phosphoprotein</keyword>
<keyword id="KW-1185">Reference proteome</keyword>
<keyword id="KW-0804">Transcription</keyword>
<keyword id="KW-0805">Transcription regulation</keyword>
<keyword id="KW-0832">Ubl conjugation</keyword>